<dbReference type="EC" id="5.4.99.12" evidence="1"/>
<dbReference type="EMBL" id="CP000102">
    <property type="protein sequence ID" value="ABC56789.1"/>
    <property type="molecule type" value="Genomic_DNA"/>
</dbReference>
<dbReference type="RefSeq" id="WP_011405989.1">
    <property type="nucleotide sequence ID" value="NC_007681.1"/>
</dbReference>
<dbReference type="SMR" id="Q2NHB4"/>
<dbReference type="STRING" id="339860.Msp_0388"/>
<dbReference type="GeneID" id="41324962"/>
<dbReference type="KEGG" id="mst:Msp_0388"/>
<dbReference type="eggNOG" id="arCOG04449">
    <property type="taxonomic scope" value="Archaea"/>
</dbReference>
<dbReference type="HOGENOM" id="CLU_014673_4_2_2"/>
<dbReference type="OrthoDB" id="25720at2157"/>
<dbReference type="Proteomes" id="UP000001931">
    <property type="component" value="Chromosome"/>
</dbReference>
<dbReference type="GO" id="GO:0003723">
    <property type="term" value="F:RNA binding"/>
    <property type="evidence" value="ECO:0007669"/>
    <property type="project" value="InterPro"/>
</dbReference>
<dbReference type="GO" id="GO:0160147">
    <property type="term" value="F:tRNA pseudouridine(38-40) synthase activity"/>
    <property type="evidence" value="ECO:0007669"/>
    <property type="project" value="UniProtKB-EC"/>
</dbReference>
<dbReference type="GO" id="GO:0031119">
    <property type="term" value="P:tRNA pseudouridine synthesis"/>
    <property type="evidence" value="ECO:0007669"/>
    <property type="project" value="UniProtKB-UniRule"/>
</dbReference>
<dbReference type="Gene3D" id="3.30.70.660">
    <property type="entry name" value="Pseudouridine synthase I, catalytic domain, C-terminal subdomain"/>
    <property type="match status" value="1"/>
</dbReference>
<dbReference type="Gene3D" id="3.30.70.580">
    <property type="entry name" value="Pseudouridine synthase I, catalytic domain, N-terminal subdomain"/>
    <property type="match status" value="1"/>
</dbReference>
<dbReference type="HAMAP" id="MF_00171">
    <property type="entry name" value="TruA"/>
    <property type="match status" value="1"/>
</dbReference>
<dbReference type="InterPro" id="IPR020103">
    <property type="entry name" value="PsdUridine_synth_cat_dom_sf"/>
</dbReference>
<dbReference type="InterPro" id="IPR001406">
    <property type="entry name" value="PsdUridine_synth_TruA"/>
</dbReference>
<dbReference type="InterPro" id="IPR020097">
    <property type="entry name" value="PsdUridine_synth_TruA_a/b_dom"/>
</dbReference>
<dbReference type="InterPro" id="IPR020095">
    <property type="entry name" value="PsdUridine_synth_TruA_C"/>
</dbReference>
<dbReference type="InterPro" id="IPR020094">
    <property type="entry name" value="TruA/RsuA/RluB/E/F_N"/>
</dbReference>
<dbReference type="NCBIfam" id="TIGR00071">
    <property type="entry name" value="hisT_truA"/>
    <property type="match status" value="1"/>
</dbReference>
<dbReference type="PANTHER" id="PTHR11142">
    <property type="entry name" value="PSEUDOURIDYLATE SYNTHASE"/>
    <property type="match status" value="1"/>
</dbReference>
<dbReference type="PANTHER" id="PTHR11142:SF0">
    <property type="entry name" value="TRNA PSEUDOURIDINE SYNTHASE-LIKE 1"/>
    <property type="match status" value="1"/>
</dbReference>
<dbReference type="Pfam" id="PF01416">
    <property type="entry name" value="PseudoU_synth_1"/>
    <property type="match status" value="1"/>
</dbReference>
<dbReference type="PIRSF" id="PIRSF001430">
    <property type="entry name" value="tRNA_psdUrid_synth"/>
    <property type="match status" value="1"/>
</dbReference>
<dbReference type="SUPFAM" id="SSF55120">
    <property type="entry name" value="Pseudouridine synthase"/>
    <property type="match status" value="1"/>
</dbReference>
<name>TRUA_METST</name>
<feature type="chain" id="PRO_1000194583" description="tRNA pseudouridine synthase A">
    <location>
        <begin position="1"/>
        <end position="274"/>
    </location>
</feature>
<feature type="active site" description="Nucleophile" evidence="1">
    <location>
        <position position="56"/>
    </location>
</feature>
<feature type="binding site" evidence="1">
    <location>
        <position position="109"/>
    </location>
    <ligand>
        <name>substrate</name>
    </ligand>
</feature>
<reference key="1">
    <citation type="journal article" date="2006" name="J. Bacteriol.">
        <title>The genome sequence of Methanosphaera stadtmanae reveals why this human intestinal archaeon is restricted to methanol and H2 for methane formation and ATP synthesis.</title>
        <authorList>
            <person name="Fricke W.F."/>
            <person name="Seedorf H."/>
            <person name="Henne A."/>
            <person name="Kruer M."/>
            <person name="Liesegang H."/>
            <person name="Hedderich R."/>
            <person name="Gottschalk G."/>
            <person name="Thauer R.K."/>
        </authorList>
    </citation>
    <scope>NUCLEOTIDE SEQUENCE [LARGE SCALE GENOMIC DNA]</scope>
    <source>
        <strain>ATCC 43021 / DSM 3091 / JCM 11832 / MCB-3</strain>
    </source>
</reference>
<protein>
    <recommendedName>
        <fullName evidence="1">tRNA pseudouridine synthase A</fullName>
        <ecNumber evidence="1">5.4.99.12</ecNumber>
    </recommendedName>
    <alternativeName>
        <fullName evidence="1">tRNA pseudouridine(38-40) synthase</fullName>
    </alternativeName>
    <alternativeName>
        <fullName evidence="1">tRNA pseudouridylate synthase I</fullName>
    </alternativeName>
    <alternativeName>
        <fullName evidence="1">tRNA-uridine isomerase I</fullName>
    </alternativeName>
</protein>
<accession>Q2NHB4</accession>
<organism>
    <name type="scientific">Methanosphaera stadtmanae (strain ATCC 43021 / DSM 3091 / JCM 11832 / MCB-3)</name>
    <dbReference type="NCBI Taxonomy" id="339860"/>
    <lineage>
        <taxon>Archaea</taxon>
        <taxon>Methanobacteriati</taxon>
        <taxon>Methanobacteriota</taxon>
        <taxon>Methanomada group</taxon>
        <taxon>Methanobacteria</taxon>
        <taxon>Methanobacteriales</taxon>
        <taxon>Methanobacteriaceae</taxon>
        <taxon>Methanosphaera</taxon>
    </lineage>
</organism>
<comment type="function">
    <text evidence="1">Formation of pseudouridine at positions 38, 39 and 40 in the anticodon stem and loop of transfer RNAs.</text>
</comment>
<comment type="catalytic activity">
    <reaction evidence="1">
        <text>uridine(38/39/40) in tRNA = pseudouridine(38/39/40) in tRNA</text>
        <dbReference type="Rhea" id="RHEA:22376"/>
        <dbReference type="Rhea" id="RHEA-COMP:10085"/>
        <dbReference type="Rhea" id="RHEA-COMP:10087"/>
        <dbReference type="ChEBI" id="CHEBI:65314"/>
        <dbReference type="ChEBI" id="CHEBI:65315"/>
        <dbReference type="EC" id="5.4.99.12"/>
    </reaction>
</comment>
<comment type="similarity">
    <text evidence="1">Belongs to the tRNA pseudouridine synthase TruA family.</text>
</comment>
<sequence length="274" mass="32045">MRRVALKIAYIGSNFHGYQRQPNYRTVEGELLRVFKETNIIEDTWTAHYSVAGRTDKGVHSTGNVISFITDEDIHINQLNGLLPDDIKIIGEARVPYGFKVRFPLTRTYTYIQPISPFEKKNLDITKMHVAMESFIGKHNFRNFSKRNEKNPNRKIIDVNLEVDEDVLIFTIVGESFLWNMVRKMVTSIMEVGYGKLDINDINELLKPKELRQFIRLQPAPANGLILSDMEYKNIKFKDSEYAKNKLVEFLKKEYMLHEQEKKADCRLIKILKK</sequence>
<proteinExistence type="inferred from homology"/>
<keyword id="KW-0413">Isomerase</keyword>
<keyword id="KW-1185">Reference proteome</keyword>
<keyword id="KW-0819">tRNA processing</keyword>
<gene>
    <name evidence="1" type="primary">truA</name>
    <name type="ordered locus">Msp_0388</name>
</gene>
<evidence type="ECO:0000255" key="1">
    <source>
        <dbReference type="HAMAP-Rule" id="MF_00171"/>
    </source>
</evidence>